<dbReference type="EMBL" id="CP001113">
    <property type="protein sequence ID" value="ACF62397.1"/>
    <property type="molecule type" value="Genomic_DNA"/>
</dbReference>
<dbReference type="RefSeq" id="WP_000692195.1">
    <property type="nucleotide sequence ID" value="NZ_CCMR01000003.1"/>
</dbReference>
<dbReference type="SMR" id="B4T6K2"/>
<dbReference type="KEGG" id="see:SNSL254_A0081"/>
<dbReference type="HOGENOM" id="CLU_060196_2_2_6"/>
<dbReference type="UniPathway" id="UPA00117"/>
<dbReference type="Proteomes" id="UP000008824">
    <property type="component" value="Chromosome"/>
</dbReference>
<dbReference type="GO" id="GO:0009055">
    <property type="term" value="F:electron transfer activity"/>
    <property type="evidence" value="ECO:0007669"/>
    <property type="project" value="InterPro"/>
</dbReference>
<dbReference type="GO" id="GO:0009437">
    <property type="term" value="P:carnitine metabolic process"/>
    <property type="evidence" value="ECO:0007669"/>
    <property type="project" value="UniProtKB-UniRule"/>
</dbReference>
<dbReference type="CDD" id="cd01714">
    <property type="entry name" value="ETF_beta"/>
    <property type="match status" value="1"/>
</dbReference>
<dbReference type="FunFam" id="3.40.50.620:FF:000072">
    <property type="entry name" value="Protein FixA homolog"/>
    <property type="match status" value="1"/>
</dbReference>
<dbReference type="Gene3D" id="3.40.50.620">
    <property type="entry name" value="HUPs"/>
    <property type="match status" value="1"/>
</dbReference>
<dbReference type="HAMAP" id="MF_01055">
    <property type="entry name" value="FixA"/>
    <property type="match status" value="1"/>
</dbReference>
<dbReference type="InterPro" id="IPR000049">
    <property type="entry name" value="ET-Flavoprotein_bsu_CS"/>
</dbReference>
<dbReference type="InterPro" id="IPR014730">
    <property type="entry name" value="ETF_a/b_N"/>
</dbReference>
<dbReference type="InterPro" id="IPR012255">
    <property type="entry name" value="ETF_b"/>
</dbReference>
<dbReference type="InterPro" id="IPR033948">
    <property type="entry name" value="ETF_beta_N"/>
</dbReference>
<dbReference type="InterPro" id="IPR023463">
    <property type="entry name" value="FixA"/>
</dbReference>
<dbReference type="InterPro" id="IPR014729">
    <property type="entry name" value="Rossmann-like_a/b/a_fold"/>
</dbReference>
<dbReference type="NCBIfam" id="NF002888">
    <property type="entry name" value="PRK03359.1"/>
    <property type="match status" value="1"/>
</dbReference>
<dbReference type="PANTHER" id="PTHR21294">
    <property type="entry name" value="ELECTRON TRANSFER FLAVOPROTEIN BETA-SUBUNIT"/>
    <property type="match status" value="1"/>
</dbReference>
<dbReference type="PANTHER" id="PTHR21294:SF17">
    <property type="entry name" value="PROTEIN FIXA"/>
    <property type="match status" value="1"/>
</dbReference>
<dbReference type="Pfam" id="PF01012">
    <property type="entry name" value="ETF"/>
    <property type="match status" value="1"/>
</dbReference>
<dbReference type="PIRSF" id="PIRSF000090">
    <property type="entry name" value="Beta-ETF"/>
    <property type="match status" value="1"/>
</dbReference>
<dbReference type="SMART" id="SM00893">
    <property type="entry name" value="ETF"/>
    <property type="match status" value="1"/>
</dbReference>
<dbReference type="SUPFAM" id="SSF52402">
    <property type="entry name" value="Adenine nucleotide alpha hydrolases-like"/>
    <property type="match status" value="1"/>
</dbReference>
<dbReference type="PROSITE" id="PS01065">
    <property type="entry name" value="ETF_BETA"/>
    <property type="match status" value="1"/>
</dbReference>
<organism>
    <name type="scientific">Salmonella newport (strain SL254)</name>
    <dbReference type="NCBI Taxonomy" id="423368"/>
    <lineage>
        <taxon>Bacteria</taxon>
        <taxon>Pseudomonadati</taxon>
        <taxon>Pseudomonadota</taxon>
        <taxon>Gammaproteobacteria</taxon>
        <taxon>Enterobacterales</taxon>
        <taxon>Enterobacteriaceae</taxon>
        <taxon>Salmonella</taxon>
    </lineage>
</organism>
<proteinExistence type="inferred from homology"/>
<keyword id="KW-0249">Electron transport</keyword>
<keyword id="KW-0813">Transport</keyword>
<sequence>MKIITCYKCVPDEQDIAINNADGTLDFSKADSKISQYDLNAIEAACQLKQQLGDAQVVAMSVGGKALTNAKGRKDVLSRGPDELIVVIDDQFEQALPQQTASALAAAAQKSGFDLLICGDGSSDLYAQQVGLLVGEALNIPAINGVSKILSLTDSTLTVERELEDEVETLSIPLPAVIAVSTDINTPQIPSMKAILGAAKKPVQVWSPADIGLNSVPAYSAQQVAAPKQRERQRVVIEGDGEEQIAAFVENLRKII</sequence>
<evidence type="ECO:0000255" key="1">
    <source>
        <dbReference type="HAMAP-Rule" id="MF_01055"/>
    </source>
</evidence>
<reference key="1">
    <citation type="journal article" date="2011" name="J. Bacteriol.">
        <title>Comparative genomics of 28 Salmonella enterica isolates: evidence for CRISPR-mediated adaptive sublineage evolution.</title>
        <authorList>
            <person name="Fricke W.F."/>
            <person name="Mammel M.K."/>
            <person name="McDermott P.F."/>
            <person name="Tartera C."/>
            <person name="White D.G."/>
            <person name="Leclerc J.E."/>
            <person name="Ravel J."/>
            <person name="Cebula T.A."/>
        </authorList>
    </citation>
    <scope>NUCLEOTIDE SEQUENCE [LARGE SCALE GENOMIC DNA]</scope>
    <source>
        <strain>SL254</strain>
    </source>
</reference>
<feature type="chain" id="PRO_1000136325" description="Protein FixA">
    <location>
        <begin position="1"/>
        <end position="256"/>
    </location>
</feature>
<comment type="function">
    <text evidence="1">Required for anaerobic carnitine reduction. May bring reductant to CaiA.</text>
</comment>
<comment type="pathway">
    <text evidence="1">Amine and polyamine metabolism; carnitine metabolism.</text>
</comment>
<comment type="subunit">
    <text evidence="1">Heterodimer of FixA and FixB.</text>
</comment>
<comment type="similarity">
    <text evidence="1">Belongs to the ETF beta-subunit/FixA family.</text>
</comment>
<name>FIXA_SALNS</name>
<gene>
    <name evidence="1" type="primary">fixA</name>
    <name type="ordered locus">SNSL254_A0081</name>
</gene>
<accession>B4T6K2</accession>
<protein>
    <recommendedName>
        <fullName evidence="1">Protein FixA</fullName>
    </recommendedName>
</protein>